<sequence length="174" mass="19803">MSAKAQNPMRELKIEKLVLNISVGESGDRLTRASKVLEQLSGQTPVHSKARYTVRTFGIRRNEKIAVHVTIRGPKSEEILERGLKVKEYQLRTKNFSETGNFGFGIQEHIDLGIKYDPSIGIYGMDFYVVMGRPGGRVSRRKRCRSTVGNSHKTSKEDTIAWFKQRYDADVLDK</sequence>
<dbReference type="EMBL" id="AE016818">
    <property type="protein sequence ID" value="AAS52359.1"/>
    <property type="molecule type" value="Genomic_DNA"/>
</dbReference>
<dbReference type="RefSeq" id="NP_984535.1">
    <property type="nucleotide sequence ID" value="NM_209888.1"/>
</dbReference>
<dbReference type="SMR" id="Q758S7"/>
<dbReference type="FunCoup" id="Q758S7">
    <property type="interactions" value="1093"/>
</dbReference>
<dbReference type="STRING" id="284811.Q758S7"/>
<dbReference type="EnsemblFungi" id="AAS52359">
    <property type="protein sequence ID" value="AAS52359"/>
    <property type="gene ID" value="AGOS_AEL325W"/>
</dbReference>
<dbReference type="GeneID" id="4620705"/>
<dbReference type="KEGG" id="ago:AGOS_AEL325W"/>
<dbReference type="eggNOG" id="KOG0397">
    <property type="taxonomic scope" value="Eukaryota"/>
</dbReference>
<dbReference type="HOGENOM" id="CLU_061015_3_0_1"/>
<dbReference type="InParanoid" id="Q758S7"/>
<dbReference type="OMA" id="NPMKELK"/>
<dbReference type="OrthoDB" id="1734943at2759"/>
<dbReference type="Proteomes" id="UP000000591">
    <property type="component" value="Chromosome V"/>
</dbReference>
<dbReference type="GO" id="GO:0022625">
    <property type="term" value="C:cytosolic large ribosomal subunit"/>
    <property type="evidence" value="ECO:0000318"/>
    <property type="project" value="GO_Central"/>
</dbReference>
<dbReference type="GO" id="GO:0005634">
    <property type="term" value="C:nucleus"/>
    <property type="evidence" value="ECO:0007669"/>
    <property type="project" value="UniProtKB-SubCell"/>
</dbReference>
<dbReference type="GO" id="GO:0003723">
    <property type="term" value="F:RNA binding"/>
    <property type="evidence" value="ECO:0000318"/>
    <property type="project" value="GO_Central"/>
</dbReference>
<dbReference type="GO" id="GO:0019843">
    <property type="term" value="F:rRNA binding"/>
    <property type="evidence" value="ECO:0007669"/>
    <property type="project" value="UniProtKB-KW"/>
</dbReference>
<dbReference type="GO" id="GO:0003735">
    <property type="term" value="F:structural constituent of ribosome"/>
    <property type="evidence" value="ECO:0000318"/>
    <property type="project" value="GO_Central"/>
</dbReference>
<dbReference type="GO" id="GO:0006412">
    <property type="term" value="P:translation"/>
    <property type="evidence" value="ECO:0000318"/>
    <property type="project" value="GO_Central"/>
</dbReference>
<dbReference type="FunFam" id="3.30.1440.10:FF:000002">
    <property type="entry name" value="60S ribosomal protein L11"/>
    <property type="match status" value="1"/>
</dbReference>
<dbReference type="Gene3D" id="3.30.1440.10">
    <property type="match status" value="1"/>
</dbReference>
<dbReference type="InterPro" id="IPR002132">
    <property type="entry name" value="Ribosomal_uL5"/>
</dbReference>
<dbReference type="InterPro" id="IPR031309">
    <property type="entry name" value="Ribosomal_uL5_C"/>
</dbReference>
<dbReference type="InterPro" id="IPR020929">
    <property type="entry name" value="Ribosomal_uL5_CS"/>
</dbReference>
<dbReference type="InterPro" id="IPR022803">
    <property type="entry name" value="Ribosomal_uL5_dom_sf"/>
</dbReference>
<dbReference type="InterPro" id="IPR031310">
    <property type="entry name" value="Ribosomal_uL5_N"/>
</dbReference>
<dbReference type="NCBIfam" id="NF003258">
    <property type="entry name" value="PRK04219.1"/>
    <property type="match status" value="1"/>
</dbReference>
<dbReference type="PANTHER" id="PTHR11994">
    <property type="entry name" value="60S RIBOSOMAL PROTEIN L11-RELATED"/>
    <property type="match status" value="1"/>
</dbReference>
<dbReference type="Pfam" id="PF00281">
    <property type="entry name" value="Ribosomal_L5"/>
    <property type="match status" value="1"/>
</dbReference>
<dbReference type="Pfam" id="PF00673">
    <property type="entry name" value="Ribosomal_L5_C"/>
    <property type="match status" value="1"/>
</dbReference>
<dbReference type="PIRSF" id="PIRSF002161">
    <property type="entry name" value="Ribosomal_L5"/>
    <property type="match status" value="1"/>
</dbReference>
<dbReference type="SUPFAM" id="SSF55282">
    <property type="entry name" value="RL5-like"/>
    <property type="match status" value="1"/>
</dbReference>
<dbReference type="PROSITE" id="PS00358">
    <property type="entry name" value="RIBOSOMAL_L5"/>
    <property type="match status" value="1"/>
</dbReference>
<name>RL11_EREGS</name>
<accession>Q758S7</accession>
<feature type="chain" id="PRO_0000125100" description="Large ribosomal subunit protein uL5">
    <location>
        <begin position="1"/>
        <end position="174"/>
    </location>
</feature>
<comment type="function">
    <text evidence="1">Component of the ribosome, a large ribonucleoprotein complex responsible for the synthesis of proteins in the cell. The small ribosomal subunit (SSU) binds messenger RNAs (mRNAs) and translates the encoded message by selecting cognate aminoacyl-transfer RNA (tRNA) molecules. The large subunit (LSU) contains the ribosomal catalytic site termed the peptidyl transferase center (PTC), which catalyzes the formation of peptide bonds, thereby polymerizing the amino acids delivered by tRNAs into a polypeptide chain. The nascent polypeptides leave the ribosome through a tunnel in the LSU and interact with protein factors that function in enzymatic processing, targeting, and the membrane insertion of nascent chains at the exit of the ribosomal tunnel.</text>
</comment>
<comment type="subunit">
    <text evidence="1">Component of the large ribosomal subunit.</text>
</comment>
<comment type="subcellular location">
    <subcellularLocation>
        <location evidence="1">Nucleus</location>
    </subcellularLocation>
    <subcellularLocation>
        <location evidence="1">Cytoplasm</location>
    </subcellularLocation>
</comment>
<comment type="similarity">
    <text evidence="2">Belongs to the universal ribosomal protein uL5 family.</text>
</comment>
<protein>
    <recommendedName>
        <fullName evidence="2">Large ribosomal subunit protein uL5</fullName>
    </recommendedName>
    <alternativeName>
        <fullName>60S ribosomal protein L11</fullName>
    </alternativeName>
</protein>
<organism>
    <name type="scientific">Eremothecium gossypii (strain ATCC 10895 / CBS 109.51 / FGSC 9923 / NRRL Y-1056)</name>
    <name type="common">Yeast</name>
    <name type="synonym">Ashbya gossypii</name>
    <dbReference type="NCBI Taxonomy" id="284811"/>
    <lineage>
        <taxon>Eukaryota</taxon>
        <taxon>Fungi</taxon>
        <taxon>Dikarya</taxon>
        <taxon>Ascomycota</taxon>
        <taxon>Saccharomycotina</taxon>
        <taxon>Saccharomycetes</taxon>
        <taxon>Saccharomycetales</taxon>
        <taxon>Saccharomycetaceae</taxon>
        <taxon>Eremothecium</taxon>
    </lineage>
</organism>
<reference key="1">
    <citation type="journal article" date="2004" name="Science">
        <title>The Ashbya gossypii genome as a tool for mapping the ancient Saccharomyces cerevisiae genome.</title>
        <authorList>
            <person name="Dietrich F.S."/>
            <person name="Voegeli S."/>
            <person name="Brachat S."/>
            <person name="Lerch A."/>
            <person name="Gates K."/>
            <person name="Steiner S."/>
            <person name="Mohr C."/>
            <person name="Poehlmann R."/>
            <person name="Luedi P."/>
            <person name="Choi S."/>
            <person name="Wing R.A."/>
            <person name="Flavier A."/>
            <person name="Gaffney T.D."/>
            <person name="Philippsen P."/>
        </authorList>
    </citation>
    <scope>NUCLEOTIDE SEQUENCE [LARGE SCALE GENOMIC DNA]</scope>
    <source>
        <strain>ATCC 10895 / CBS 109.51 / FGSC 9923 / NRRL Y-1056</strain>
    </source>
</reference>
<reference key="2">
    <citation type="journal article" date="2013" name="G3 (Bethesda)">
        <title>Genomes of Ashbya fungi isolated from insects reveal four mating-type loci, numerous translocations, lack of transposons, and distinct gene duplications.</title>
        <authorList>
            <person name="Dietrich F.S."/>
            <person name="Voegeli S."/>
            <person name="Kuo S."/>
            <person name="Philippsen P."/>
        </authorList>
    </citation>
    <scope>GENOME REANNOTATION</scope>
    <source>
        <strain>ATCC 10895 / CBS 109.51 / FGSC 9923 / NRRL Y-1056</strain>
    </source>
</reference>
<gene>
    <name type="primary">RPL11</name>
    <name type="ordered locus">AEL325W</name>
</gene>
<evidence type="ECO:0000250" key="1">
    <source>
        <dbReference type="UniProtKB" id="P0C0W9"/>
    </source>
</evidence>
<evidence type="ECO:0000305" key="2"/>
<keyword id="KW-0963">Cytoplasm</keyword>
<keyword id="KW-0539">Nucleus</keyword>
<keyword id="KW-1185">Reference proteome</keyword>
<keyword id="KW-0687">Ribonucleoprotein</keyword>
<keyword id="KW-0689">Ribosomal protein</keyword>
<keyword id="KW-0694">RNA-binding</keyword>
<keyword id="KW-0699">rRNA-binding</keyword>
<proteinExistence type="inferred from homology"/>